<name>PLSX_STRP3</name>
<evidence type="ECO:0000255" key="1">
    <source>
        <dbReference type="HAMAP-Rule" id="MF_00019"/>
    </source>
</evidence>
<gene>
    <name evidence="1" type="primary">plsX</name>
    <name type="ordered locus">SpyM3_0017</name>
</gene>
<comment type="function">
    <text evidence="1">Catalyzes the reversible formation of acyl-phosphate (acyl-PO(4)) from acyl-[acyl-carrier-protein] (acyl-ACP). This enzyme utilizes acyl-ACP as fatty acyl donor, but not acyl-CoA.</text>
</comment>
<comment type="catalytic activity">
    <reaction evidence="1">
        <text>a fatty acyl-[ACP] + phosphate = an acyl phosphate + holo-[ACP]</text>
        <dbReference type="Rhea" id="RHEA:42292"/>
        <dbReference type="Rhea" id="RHEA-COMP:9685"/>
        <dbReference type="Rhea" id="RHEA-COMP:14125"/>
        <dbReference type="ChEBI" id="CHEBI:43474"/>
        <dbReference type="ChEBI" id="CHEBI:59918"/>
        <dbReference type="ChEBI" id="CHEBI:64479"/>
        <dbReference type="ChEBI" id="CHEBI:138651"/>
        <dbReference type="EC" id="2.3.1.274"/>
    </reaction>
</comment>
<comment type="pathway">
    <text evidence="1">Lipid metabolism; phospholipid metabolism.</text>
</comment>
<comment type="subunit">
    <text evidence="1">Homodimer. Probably interacts with PlsY.</text>
</comment>
<comment type="subcellular location">
    <subcellularLocation>
        <location evidence="1">Cytoplasm</location>
    </subcellularLocation>
    <text evidence="1">Associated with the membrane possibly through PlsY.</text>
</comment>
<comment type="similarity">
    <text evidence="1">Belongs to the PlsX family.</text>
</comment>
<protein>
    <recommendedName>
        <fullName evidence="1">Phosphate acyltransferase</fullName>
        <ecNumber evidence="1">2.3.1.274</ecNumber>
    </recommendedName>
    <alternativeName>
        <fullName evidence="1">Acyl-ACP phosphotransacylase</fullName>
    </alternativeName>
    <alternativeName>
        <fullName evidence="1">Acyl-[acyl-carrier-protein]--phosphate acyltransferase</fullName>
    </alternativeName>
    <alternativeName>
        <fullName evidence="1">Phosphate-acyl-ACP acyltransferase</fullName>
    </alternativeName>
</protein>
<keyword id="KW-0963">Cytoplasm</keyword>
<keyword id="KW-0444">Lipid biosynthesis</keyword>
<keyword id="KW-0443">Lipid metabolism</keyword>
<keyword id="KW-0594">Phospholipid biosynthesis</keyword>
<keyword id="KW-1208">Phospholipid metabolism</keyword>
<keyword id="KW-0808">Transferase</keyword>
<dbReference type="EC" id="2.3.1.274" evidence="1"/>
<dbReference type="EMBL" id="AE014074">
    <property type="protein sequence ID" value="AAM78624.1"/>
    <property type="molecule type" value="Genomic_DNA"/>
</dbReference>
<dbReference type="RefSeq" id="WP_002987696.1">
    <property type="nucleotide sequence ID" value="NC_004070.1"/>
</dbReference>
<dbReference type="SMR" id="P0DD08"/>
<dbReference type="KEGG" id="spg:SpyM3_0017"/>
<dbReference type="HOGENOM" id="CLU_039379_1_1_9"/>
<dbReference type="UniPathway" id="UPA00085"/>
<dbReference type="Proteomes" id="UP000000564">
    <property type="component" value="Chromosome"/>
</dbReference>
<dbReference type="GO" id="GO:0005737">
    <property type="term" value="C:cytoplasm"/>
    <property type="evidence" value="ECO:0007669"/>
    <property type="project" value="UniProtKB-SubCell"/>
</dbReference>
<dbReference type="GO" id="GO:0043811">
    <property type="term" value="F:phosphate:acyl-[acyl carrier protein] acyltransferase activity"/>
    <property type="evidence" value="ECO:0007669"/>
    <property type="project" value="UniProtKB-UniRule"/>
</dbReference>
<dbReference type="GO" id="GO:0006633">
    <property type="term" value="P:fatty acid biosynthetic process"/>
    <property type="evidence" value="ECO:0007669"/>
    <property type="project" value="UniProtKB-UniRule"/>
</dbReference>
<dbReference type="GO" id="GO:0008654">
    <property type="term" value="P:phospholipid biosynthetic process"/>
    <property type="evidence" value="ECO:0007669"/>
    <property type="project" value="UniProtKB-KW"/>
</dbReference>
<dbReference type="Gene3D" id="3.40.718.10">
    <property type="entry name" value="Isopropylmalate Dehydrogenase"/>
    <property type="match status" value="1"/>
</dbReference>
<dbReference type="HAMAP" id="MF_00019">
    <property type="entry name" value="PlsX"/>
    <property type="match status" value="1"/>
</dbReference>
<dbReference type="InterPro" id="IPR003664">
    <property type="entry name" value="FA_synthesis"/>
</dbReference>
<dbReference type="InterPro" id="IPR012281">
    <property type="entry name" value="Phospholipid_synth_PlsX-like"/>
</dbReference>
<dbReference type="NCBIfam" id="TIGR00182">
    <property type="entry name" value="plsX"/>
    <property type="match status" value="1"/>
</dbReference>
<dbReference type="PANTHER" id="PTHR30100">
    <property type="entry name" value="FATTY ACID/PHOSPHOLIPID SYNTHESIS PROTEIN PLSX"/>
    <property type="match status" value="1"/>
</dbReference>
<dbReference type="PANTHER" id="PTHR30100:SF1">
    <property type="entry name" value="PHOSPHATE ACYLTRANSFERASE"/>
    <property type="match status" value="1"/>
</dbReference>
<dbReference type="Pfam" id="PF02504">
    <property type="entry name" value="FA_synthesis"/>
    <property type="match status" value="1"/>
</dbReference>
<dbReference type="PIRSF" id="PIRSF002465">
    <property type="entry name" value="Phsphlp_syn_PlsX"/>
    <property type="match status" value="1"/>
</dbReference>
<dbReference type="SUPFAM" id="SSF53659">
    <property type="entry name" value="Isocitrate/Isopropylmalate dehydrogenase-like"/>
    <property type="match status" value="1"/>
</dbReference>
<feature type="chain" id="PRO_0000189949" description="Phosphate acyltransferase">
    <location>
        <begin position="1"/>
        <end position="335"/>
    </location>
</feature>
<accession>P0DD08</accession>
<accession>P65743</accession>
<accession>Q9A1Z5</accession>
<proteinExistence type="inferred from homology"/>
<organism>
    <name type="scientific">Streptococcus pyogenes serotype M3 (strain ATCC BAA-595 / MGAS315)</name>
    <dbReference type="NCBI Taxonomy" id="198466"/>
    <lineage>
        <taxon>Bacteria</taxon>
        <taxon>Bacillati</taxon>
        <taxon>Bacillota</taxon>
        <taxon>Bacilli</taxon>
        <taxon>Lactobacillales</taxon>
        <taxon>Streptococcaceae</taxon>
        <taxon>Streptococcus</taxon>
    </lineage>
</organism>
<reference key="1">
    <citation type="journal article" date="2002" name="Proc. Natl. Acad. Sci. U.S.A.">
        <title>Genome sequence of a serotype M3 strain of group A Streptococcus: phage-encoded toxins, the high-virulence phenotype, and clone emergence.</title>
        <authorList>
            <person name="Beres S.B."/>
            <person name="Sylva G.L."/>
            <person name="Barbian K.D."/>
            <person name="Lei B."/>
            <person name="Hoff J.S."/>
            <person name="Mammarella N.D."/>
            <person name="Liu M.-Y."/>
            <person name="Smoot J.C."/>
            <person name="Porcella S.F."/>
            <person name="Parkins L.D."/>
            <person name="Campbell D.S."/>
            <person name="Smith T.M."/>
            <person name="McCormick J.K."/>
            <person name="Leung D.Y.M."/>
            <person name="Schlievert P.M."/>
            <person name="Musser J.M."/>
        </authorList>
    </citation>
    <scope>NUCLEOTIDE SEQUENCE [LARGE SCALE GENOMIC DNA]</scope>
    <source>
        <strain>ATCC BAA-595 / MGAS315</strain>
    </source>
</reference>
<sequence length="335" mass="35497">MKRIAIDAMGGDNAPKAIVEGVNQAIEAFSDIEIQLYGDQTKINSYLIQSDRVAIIHTDEKIMSDDEPAKAVRRKKKASMVLAAKAVKEGKADAIISAGNTGALLAVGLFVVGRIKGVDRPGLLSTIPTVTGLGFDMLDLGANAENTAKHLHQYAILGSFYAKNVRGIANPRVGLLNNGTEETKGDPLRKATYELLTADNTISFVGNVEARELMSGVADVIVSDGFTGNAVLKSIEGTAISIMGQLKQIINSGGIKTKIGASLLKSSLYEMKKTLDYSSAGGAVLFGLKAPVVKSHGSSDVKAIFSTIKQVRTMLDTNVVGQLVEEFAKETQVND</sequence>